<dbReference type="EC" id="2.1.1.-" evidence="2"/>
<dbReference type="SMR" id="P9WEN1"/>
<dbReference type="iPTMnet" id="P9WEN1"/>
<dbReference type="GO" id="GO:0008168">
    <property type="term" value="F:methyltransferase activity"/>
    <property type="evidence" value="ECO:0007669"/>
    <property type="project" value="UniProtKB-KW"/>
</dbReference>
<dbReference type="GO" id="GO:0032259">
    <property type="term" value="P:methylation"/>
    <property type="evidence" value="ECO:0007669"/>
    <property type="project" value="UniProtKB-KW"/>
</dbReference>
<dbReference type="CDD" id="cd19916">
    <property type="entry name" value="OphMA_like"/>
    <property type="match status" value="1"/>
</dbReference>
<dbReference type="Gene3D" id="3.40.1010.10">
    <property type="entry name" value="Cobalt-precorrin-4 Transmethylase, Domain 1"/>
    <property type="match status" value="1"/>
</dbReference>
<dbReference type="InterPro" id="IPR000878">
    <property type="entry name" value="4pyrrol_Mease"/>
</dbReference>
<dbReference type="InterPro" id="IPR035996">
    <property type="entry name" value="4pyrrol_Methylase_sf"/>
</dbReference>
<dbReference type="InterPro" id="IPR014777">
    <property type="entry name" value="4pyrrole_Mease_sub1"/>
</dbReference>
<dbReference type="Pfam" id="PF00590">
    <property type="entry name" value="TP_methylase"/>
    <property type="match status" value="1"/>
</dbReference>
<dbReference type="SUPFAM" id="SSF53790">
    <property type="entry name" value="Tetrapyrrole methylase"/>
    <property type="match status" value="1"/>
</dbReference>
<evidence type="ECO:0000250" key="1">
    <source>
        <dbReference type="UniProtKB" id="A0A2R2JFI5"/>
    </source>
</evidence>
<evidence type="ECO:0000269" key="2">
    <source>
    </source>
</evidence>
<evidence type="ECO:0000303" key="3">
    <source>
    </source>
</evidence>
<evidence type="ECO:0000305" key="4"/>
<evidence type="ECO:0000305" key="5">
    <source>
    </source>
</evidence>
<organism>
    <name type="scientific">Gymnopus fusipes</name>
    <name type="common">Spindle toughshank</name>
    <name type="synonym">Collybia fusipes</name>
    <dbReference type="NCBI Taxonomy" id="93828"/>
    <lineage>
        <taxon>Eukaryota</taxon>
        <taxon>Fungi</taxon>
        <taxon>Dikarya</taxon>
        <taxon>Basidiomycota</taxon>
        <taxon>Agaricomycotina</taxon>
        <taxon>Agaricomycetes</taxon>
        <taxon>Agaricomycetidae</taxon>
        <taxon>Agaricales</taxon>
        <taxon>Marasmiineae</taxon>
        <taxon>Omphalotaceae</taxon>
        <taxon>Gymnopus</taxon>
    </lineage>
</organism>
<keyword id="KW-0488">Methylation</keyword>
<keyword id="KW-0489">Methyltransferase</keyword>
<keyword id="KW-0949">S-adenosyl-L-methionine</keyword>
<keyword id="KW-0808">Transferase</keyword>
<keyword id="KW-0843">Virulence</keyword>
<accession>P9WEN1</accession>
<proteinExistence type="evidence at protein level"/>
<sequence>MQSSTQKQAGSLTIVGSGIESISQITLQSLSHIEAASKVFYCVVDPATEAYLLAKNKNCVDLYQYYDNGKPRMDTYIQMAEVMLREVRNGLDIVGVFYGHPGVFVNPSQRAIAIAKSEGYQARMLPGISAEDCLFADLGIDPCNPGCVSYEASDFLIRERPVNVSSHFILWQVGCIGVADFTFVKFNNSKFGVLLDRLEHEYGADHTVVHYIAAVLPYENPVIDKLTISQLRDTEVAKRVSGISTFYIPPKELKDPSMDIMRRLELLAADQVPDKQWHFYPTNQWAPSAPNVVPYGPIEQAAIVQLGSHTIPEQFQPIATSKAMTDILTKLALDPKMLTEYKADRRAFAQSALELTVNERDALEMGTFWALRCAMKKMPSSFMDEVDANNLPVVAVVGVAVGAVAVTVVVSLNDLTDSVN</sequence>
<reference key="1">
    <citation type="journal article" date="2016" name="Org. Lett.">
        <title>Gymnopeptides A and B, cyclic octadecapeptides from the mushroom Gymnopus fusipes.</title>
        <authorList>
            <person name="Vanyolos A."/>
            <person name="Dekany M."/>
            <person name="Kovacs B."/>
            <person name="Kramos B."/>
            <person name="Berdi P."/>
            <person name="Zupko I."/>
            <person name="Hohmann J."/>
            <person name="Beni Z."/>
        </authorList>
    </citation>
    <scope>BIOTECHNOLOGY</scope>
</reference>
<reference key="2">
    <citation type="journal article" date="2019" name="J. Am. Chem. Soc.">
        <title>Distinct autocatalytic alpha-N-methylating precursors expand the borosin RiPP family of peptide natural products.</title>
        <authorList>
            <person name="Quijano M.R."/>
            <person name="Zach C."/>
            <person name="Miller F.S."/>
            <person name="Lee A.R."/>
            <person name="Imani A.S."/>
            <person name="Kuenzler M."/>
            <person name="Freeman M.F."/>
        </authorList>
    </citation>
    <scope>FUNCTION</scope>
    <scope>CATALYTIC ACTIVITY</scope>
    <scope>DOMAIN</scope>
    <scope>METHYLATION AT VAL-394; VAL-396; GLY-398; VAL-399; ALA-400; GLY-402; VAL-404; VAL-406; VAL-408 AND VAL-410</scope>
</reference>
<protein>
    <recommendedName>
        <fullName evidence="3">Methyltransferase/ribosomally synthesized cyclic peptide gymnopeptides precursor gymMA1</fullName>
    </recommendedName>
    <alternativeName>
        <fullName evidence="3">Gymnopeptides biosynthesis cluster protein MA1</fullName>
    </alternativeName>
    <component>
        <recommendedName>
            <fullName evidence="3">N-methyltranferase gymM1</fullName>
            <ecNumber evidence="2">2.1.1.-</ecNumber>
        </recommendedName>
    </component>
    <component>
        <recommendedName>
            <fullName evidence="3">Ribosomally synthesized cyclic gymnopeptides core peptide</fullName>
        </recommendedName>
    </component>
    <component>
        <recommendedName>
            <fullName evidence="1">Follower peptide</fullName>
        </recommendedName>
    </component>
</protein>
<comment type="function">
    <text evidence="2 5">Fusion protein of the methyltransferase gymM1 and the gymnopeptides precursor; part of the gene cluster that mediates the biosynthesis of gymnopeptides, highly methylated cyclic octadecapeptides with striking antiproliferative activity on several human cancer cell lines (PubMed:31117659). Gymnopeptides derive from the C-terminus of the gymMA1 protein, and it is the gymMA1 protein that methylates its own C-terminus using S-adenosyl methionine (SAM) (PubMed:31117659). The C-terminus is subsequently cleaved off and macrocyclized by a prolyloligopeptidase to give the final product (Probable).</text>
</comment>
<comment type="pathway">
    <text evidence="5">Mycotoxin biosynthesis.</text>
</comment>
<comment type="subunit">
    <text evidence="1">Homodimer.</text>
</comment>
<comment type="domain">
    <text evidence="5">Within the homodimer, the clasp domain wraps around the adjacent subunit to position the core peptide into the other subunit's active site for iterative intermolecular methylation.</text>
</comment>
<comment type="PTM">
    <text evidence="2 4">GymMA1 automethylates at Val-394, Val-396, Gly-398, Val-399, Ala-400, Gly-402, Val-404, Val-406, Val-408 and Val-410 before being processed by a prolyloligopeptidase which likely forms a peptidyl ester upon removal of the follower propeptide, which then undergoes macrocyclization with the N-terminus of the modified core peptide (PubMed:31117659). Peptide backbone alpha-N-methylations change the physicochemical properties of amide bonds to provide structural constraints and other favorable characteristics including biological membrane permeability to peptides (Probable).</text>
</comment>
<comment type="biotechnology">
    <text evidence="2">Gymnopeeptides exhibit striking antiproliferative properties on various human adherent cancer cell lines including cervical (HeLa), skin epidermoid (A431), and breast (T47D, MCF7, and MDA- MB-231) cell lines (PubMed:31117659). Gymnopeptide B is more potent than gymnopeptide A, while both of them are at least 2 orders of magnitude more efficient than that of the reference agent cisplatin (PubMed:31117659).</text>
</comment>
<comment type="similarity">
    <text evidence="4">In the N-terminal section; belongs to the precorrin methyltransferase family.</text>
</comment>
<feature type="chain" id="PRO_0000458516" description="N-methyltranferase gymM1" evidence="5">
    <location>
        <begin position="1"/>
        <end position="392"/>
    </location>
</feature>
<feature type="peptide" id="PRO_0000458517" description="Ribosomally synthesized cyclic gymnopeptides core peptide" evidence="5">
    <location>
        <begin position="393"/>
        <end position="410"/>
    </location>
</feature>
<feature type="peptide" id="PRO_0000458518" description="Follower peptide" evidence="5">
    <location>
        <begin position="411"/>
        <end position="420"/>
    </location>
</feature>
<feature type="region of interest" description="Methyltransferase domain" evidence="1">
    <location>
        <begin position="1"/>
        <end position="251"/>
    </location>
</feature>
<feature type="region of interest" description="Clasp domain" evidence="1">
    <location>
        <begin position="252"/>
        <end position="378"/>
    </location>
</feature>
<feature type="region of interest" description="Precursor leader" evidence="1">
    <location>
        <begin position="379"/>
        <end position="392"/>
    </location>
</feature>
<feature type="active site" evidence="1">
    <location>
        <position position="72"/>
    </location>
</feature>
<feature type="active site" evidence="1">
    <location>
        <position position="76"/>
    </location>
</feature>
<feature type="active site" evidence="1">
    <location>
        <position position="98"/>
    </location>
</feature>
<feature type="binding site" evidence="1">
    <location>
        <position position="98"/>
    </location>
    <ligand>
        <name>S-adenosyl-L-methionine</name>
        <dbReference type="ChEBI" id="CHEBI:59789"/>
    </ligand>
</feature>
<feature type="binding site" evidence="1">
    <location>
        <position position="100"/>
    </location>
    <ligand>
        <name>S-adenosyl-L-methionine</name>
        <dbReference type="ChEBI" id="CHEBI:59789"/>
    </ligand>
</feature>
<feature type="binding site" evidence="1">
    <location>
        <position position="103"/>
    </location>
    <ligand>
        <name>S-adenosyl-L-methionine</name>
        <dbReference type="ChEBI" id="CHEBI:59789"/>
    </ligand>
</feature>
<feature type="binding site" evidence="1">
    <location>
        <position position="130"/>
    </location>
    <ligand>
        <name>S-adenosyl-L-methionine</name>
        <dbReference type="ChEBI" id="CHEBI:59789"/>
    </ligand>
</feature>
<feature type="binding site" evidence="1">
    <location>
        <position position="172"/>
    </location>
    <ligand>
        <name>S-adenosyl-L-methionine</name>
        <dbReference type="ChEBI" id="CHEBI:59789"/>
    </ligand>
</feature>
<feature type="binding site" evidence="1">
    <location>
        <position position="213"/>
    </location>
    <ligand>
        <name>S-adenosyl-L-methionine</name>
        <dbReference type="ChEBI" id="CHEBI:59789"/>
    </ligand>
</feature>
<feature type="binding site" evidence="1">
    <location>
        <position position="244"/>
    </location>
    <ligand>
        <name>S-adenosyl-L-methionine</name>
        <dbReference type="ChEBI" id="CHEBI:59789"/>
    </ligand>
</feature>
<feature type="binding site" evidence="1">
    <location>
        <position position="245"/>
    </location>
    <ligand>
        <name>S-adenosyl-L-methionine</name>
        <dbReference type="ChEBI" id="CHEBI:59789"/>
    </ligand>
</feature>
<feature type="modified residue" description="N-methylvaline" evidence="2">
    <location>
        <position position="394"/>
    </location>
</feature>
<feature type="modified residue" description="N-methylvaline" evidence="2">
    <location>
        <position position="396"/>
    </location>
</feature>
<feature type="modified residue" description="N-methylglycine" evidence="2">
    <location>
        <position position="398"/>
    </location>
</feature>
<feature type="modified residue" description="N-methylvaline" evidence="2">
    <location>
        <position position="399"/>
    </location>
</feature>
<feature type="modified residue" description="N-methylalanine" evidence="2">
    <location>
        <position position="400"/>
    </location>
</feature>
<feature type="modified residue" description="N-methylglycine" evidence="2">
    <location>
        <position position="402"/>
    </location>
</feature>
<feature type="modified residue" description="N-methylvaline" evidence="2">
    <location>
        <position position="404"/>
    </location>
</feature>
<feature type="modified residue" description="N-methylvaline" evidence="2">
    <location>
        <position position="406"/>
    </location>
</feature>
<feature type="modified residue" description="N-methylvaline" evidence="2">
    <location>
        <position position="408"/>
    </location>
</feature>
<feature type="modified residue" description="N-methylvaline" evidence="2">
    <location>
        <position position="410"/>
    </location>
</feature>
<name>GYMM1_GYMFU</name>